<accession>Q3ZZC1</accession>
<reference key="1">
    <citation type="journal article" date="2005" name="Nat. Biotechnol.">
        <title>Genome sequence of the chlorinated compound-respiring bacterium Dehalococcoides species strain CBDB1.</title>
        <authorList>
            <person name="Kube M."/>
            <person name="Beck A."/>
            <person name="Zinder S.H."/>
            <person name="Kuhl H."/>
            <person name="Reinhardt R."/>
            <person name="Adrian L."/>
        </authorList>
    </citation>
    <scope>NUCLEOTIDE SEQUENCE [LARGE SCALE GENOMIC DNA]</scope>
    <source>
        <strain>CBDB1</strain>
    </source>
</reference>
<organism>
    <name type="scientific">Dehalococcoides mccartyi (strain CBDB1)</name>
    <dbReference type="NCBI Taxonomy" id="255470"/>
    <lineage>
        <taxon>Bacteria</taxon>
        <taxon>Bacillati</taxon>
        <taxon>Chloroflexota</taxon>
        <taxon>Dehalococcoidia</taxon>
        <taxon>Dehalococcoidales</taxon>
        <taxon>Dehalococcoidaceae</taxon>
        <taxon>Dehalococcoides</taxon>
    </lineage>
</organism>
<sequence length="245" mass="27531">MPTTNIKELLEAGAHFGHQTSRWHPRMKKYIFTKRNGIHIIDLEKTVVMLDKACNYINQVVSDGGKVLFVGTKKQAQEILAEEAKRCGMYFINQRWTGGILTNFHSIQSRIDYLVRLEDQQARGDFSRLPKKEAQKLGEEIARLNRTMGGFKEMTRLPDVIFVVDPIKEKIAMAEAKRMGVPLVAMVDTNCNPDEVDYPVPSNDDAMRAIKLICSKMADAVIEAQNAMKVTEVETTGEAQAETAG</sequence>
<keyword id="KW-0687">Ribonucleoprotein</keyword>
<keyword id="KW-0689">Ribosomal protein</keyword>
<protein>
    <recommendedName>
        <fullName evidence="1">Small ribosomal subunit protein uS2</fullName>
    </recommendedName>
    <alternativeName>
        <fullName evidence="2">30S ribosomal protein S2</fullName>
    </alternativeName>
</protein>
<gene>
    <name evidence="1" type="primary">rpsB</name>
    <name type="ordered locus">cbdbA322</name>
</gene>
<evidence type="ECO:0000255" key="1">
    <source>
        <dbReference type="HAMAP-Rule" id="MF_00291"/>
    </source>
</evidence>
<evidence type="ECO:0000305" key="2"/>
<comment type="similarity">
    <text evidence="1">Belongs to the universal ribosomal protein uS2 family.</text>
</comment>
<name>RS2_DEHMC</name>
<proteinExistence type="inferred from homology"/>
<feature type="chain" id="PRO_1000003947" description="Small ribosomal subunit protein uS2">
    <location>
        <begin position="1"/>
        <end position="245"/>
    </location>
</feature>
<dbReference type="EMBL" id="AJ965256">
    <property type="protein sequence ID" value="CAI82545.1"/>
    <property type="molecule type" value="Genomic_DNA"/>
</dbReference>
<dbReference type="RefSeq" id="WP_011308902.1">
    <property type="nucleotide sequence ID" value="NC_007356.1"/>
</dbReference>
<dbReference type="SMR" id="Q3ZZC1"/>
<dbReference type="KEGG" id="deh:cbdbA322"/>
<dbReference type="HOGENOM" id="CLU_040318_1_2_0"/>
<dbReference type="Proteomes" id="UP000000433">
    <property type="component" value="Chromosome"/>
</dbReference>
<dbReference type="GO" id="GO:0022627">
    <property type="term" value="C:cytosolic small ribosomal subunit"/>
    <property type="evidence" value="ECO:0007669"/>
    <property type="project" value="TreeGrafter"/>
</dbReference>
<dbReference type="GO" id="GO:0003735">
    <property type="term" value="F:structural constituent of ribosome"/>
    <property type="evidence" value="ECO:0007669"/>
    <property type="project" value="InterPro"/>
</dbReference>
<dbReference type="GO" id="GO:0006412">
    <property type="term" value="P:translation"/>
    <property type="evidence" value="ECO:0007669"/>
    <property type="project" value="UniProtKB-UniRule"/>
</dbReference>
<dbReference type="CDD" id="cd01425">
    <property type="entry name" value="RPS2"/>
    <property type="match status" value="1"/>
</dbReference>
<dbReference type="Gene3D" id="3.40.50.10490">
    <property type="entry name" value="Glucose-6-phosphate isomerase like protein, domain 1"/>
    <property type="match status" value="1"/>
</dbReference>
<dbReference type="Gene3D" id="1.10.287.610">
    <property type="entry name" value="Helix hairpin bin"/>
    <property type="match status" value="1"/>
</dbReference>
<dbReference type="HAMAP" id="MF_00291_B">
    <property type="entry name" value="Ribosomal_uS2_B"/>
    <property type="match status" value="1"/>
</dbReference>
<dbReference type="InterPro" id="IPR001865">
    <property type="entry name" value="Ribosomal_uS2"/>
</dbReference>
<dbReference type="InterPro" id="IPR005706">
    <property type="entry name" value="Ribosomal_uS2_bac/mit/plastid"/>
</dbReference>
<dbReference type="InterPro" id="IPR018130">
    <property type="entry name" value="Ribosomal_uS2_CS"/>
</dbReference>
<dbReference type="InterPro" id="IPR023591">
    <property type="entry name" value="Ribosomal_uS2_flav_dom_sf"/>
</dbReference>
<dbReference type="NCBIfam" id="TIGR01011">
    <property type="entry name" value="rpsB_bact"/>
    <property type="match status" value="1"/>
</dbReference>
<dbReference type="PANTHER" id="PTHR12534">
    <property type="entry name" value="30S RIBOSOMAL PROTEIN S2 PROKARYOTIC AND ORGANELLAR"/>
    <property type="match status" value="1"/>
</dbReference>
<dbReference type="PANTHER" id="PTHR12534:SF0">
    <property type="entry name" value="SMALL RIBOSOMAL SUBUNIT PROTEIN US2M"/>
    <property type="match status" value="1"/>
</dbReference>
<dbReference type="Pfam" id="PF00318">
    <property type="entry name" value="Ribosomal_S2"/>
    <property type="match status" value="1"/>
</dbReference>
<dbReference type="PRINTS" id="PR00395">
    <property type="entry name" value="RIBOSOMALS2"/>
</dbReference>
<dbReference type="SUPFAM" id="SSF52313">
    <property type="entry name" value="Ribosomal protein S2"/>
    <property type="match status" value="1"/>
</dbReference>
<dbReference type="PROSITE" id="PS00962">
    <property type="entry name" value="RIBOSOMAL_S2_1"/>
    <property type="match status" value="1"/>
</dbReference>
<dbReference type="PROSITE" id="PS00963">
    <property type="entry name" value="RIBOSOMAL_S2_2"/>
    <property type="match status" value="1"/>
</dbReference>